<feature type="chain" id="PRO_0000290673" description="Nucleoporin nup211">
    <location>
        <begin position="1"/>
        <end position="1837"/>
    </location>
</feature>
<feature type="region of interest" description="Disordered" evidence="2">
    <location>
        <begin position="1464"/>
        <end position="1521"/>
    </location>
</feature>
<feature type="region of interest" description="Disordered" evidence="2">
    <location>
        <begin position="1602"/>
        <end position="1642"/>
    </location>
</feature>
<feature type="region of interest" description="Disordered" evidence="2">
    <location>
        <begin position="1700"/>
        <end position="1837"/>
    </location>
</feature>
<feature type="coiled-coil region" evidence="1">
    <location>
        <begin position="59"/>
        <end position="378"/>
    </location>
</feature>
<feature type="coiled-coil region" evidence="1">
    <location>
        <begin position="415"/>
        <end position="519"/>
    </location>
</feature>
<feature type="coiled-coil region" evidence="1">
    <location>
        <begin position="559"/>
        <end position="625"/>
    </location>
</feature>
<feature type="coiled-coil region" evidence="1">
    <location>
        <begin position="661"/>
        <end position="1163"/>
    </location>
</feature>
<feature type="coiled-coil region" evidence="1">
    <location>
        <begin position="1222"/>
        <end position="1637"/>
    </location>
</feature>
<feature type="coiled-coil region" evidence="1">
    <location>
        <begin position="1675"/>
        <end position="1712"/>
    </location>
</feature>
<feature type="compositionally biased region" description="Polar residues" evidence="2">
    <location>
        <begin position="1468"/>
        <end position="1479"/>
    </location>
</feature>
<feature type="compositionally biased region" description="Basic and acidic residues" evidence="2">
    <location>
        <begin position="1480"/>
        <end position="1521"/>
    </location>
</feature>
<feature type="compositionally biased region" description="Basic and acidic residues" evidence="2">
    <location>
        <begin position="1617"/>
        <end position="1628"/>
    </location>
</feature>
<feature type="compositionally biased region" description="Polar residues" evidence="2">
    <location>
        <begin position="1700"/>
        <end position="1730"/>
    </location>
</feature>
<feature type="compositionally biased region" description="Polar residues" evidence="2">
    <location>
        <begin position="1753"/>
        <end position="1763"/>
    </location>
</feature>
<feature type="compositionally biased region" description="Polar residues" evidence="2">
    <location>
        <begin position="1795"/>
        <end position="1814"/>
    </location>
</feature>
<feature type="compositionally biased region" description="Polar residues" evidence="2">
    <location>
        <begin position="1827"/>
        <end position="1837"/>
    </location>
</feature>
<feature type="modified residue" description="Phosphothreonine" evidence="5">
    <location>
        <position position="650"/>
    </location>
</feature>
<feature type="modified residue" description="Phosphoserine" evidence="5">
    <location>
        <position position="1558"/>
    </location>
</feature>
<feature type="modified residue" description="Phosphothreonine" evidence="5">
    <location>
        <position position="1560"/>
    </location>
</feature>
<feature type="modified residue" description="Phosphoserine" evidence="5">
    <location>
        <position position="1563"/>
    </location>
</feature>
<dbReference type="EMBL" id="CU329672">
    <property type="protein sequence ID" value="CAA19588.1"/>
    <property type="molecule type" value="Genomic_DNA"/>
</dbReference>
<dbReference type="PIR" id="T41023">
    <property type="entry name" value="T41023"/>
</dbReference>
<dbReference type="RefSeq" id="NP_588236.1">
    <property type="nucleotide sequence ID" value="NM_001023226.2"/>
</dbReference>
<dbReference type="SMR" id="O74424"/>
<dbReference type="BioGRID" id="275424">
    <property type="interactions" value="22"/>
</dbReference>
<dbReference type="FunCoup" id="O74424">
    <property type="interactions" value="692"/>
</dbReference>
<dbReference type="IntAct" id="O74424">
    <property type="interactions" value="4"/>
</dbReference>
<dbReference type="STRING" id="284812.O74424"/>
<dbReference type="iPTMnet" id="O74424"/>
<dbReference type="PaxDb" id="4896-SPCC162.08c.1"/>
<dbReference type="EnsemblFungi" id="SPCC162.08c.1">
    <property type="protein sequence ID" value="SPCC162.08c.1:pep"/>
    <property type="gene ID" value="SPCC162.08c"/>
</dbReference>
<dbReference type="GeneID" id="2538843"/>
<dbReference type="KEGG" id="spo:2538843"/>
<dbReference type="PomBase" id="SPCC162.08c">
    <property type="gene designation" value="nup211"/>
</dbReference>
<dbReference type="VEuPathDB" id="FungiDB:SPCC162.08c"/>
<dbReference type="eggNOG" id="KOG4674">
    <property type="taxonomic scope" value="Eukaryota"/>
</dbReference>
<dbReference type="HOGENOM" id="CLU_237445_0_0_1"/>
<dbReference type="InParanoid" id="O74424"/>
<dbReference type="OMA" id="HAQQNYE"/>
<dbReference type="PhylomeDB" id="O74424"/>
<dbReference type="Reactome" id="R-SPO-159227">
    <property type="pathway name" value="Transport of the SLBP independent Mature mRNA"/>
</dbReference>
<dbReference type="Reactome" id="R-SPO-159231">
    <property type="pathway name" value="Transport of Mature mRNA Derived from an Intronless Transcript"/>
</dbReference>
<dbReference type="Reactome" id="R-SPO-159236">
    <property type="pathway name" value="Transport of Mature mRNA derived from an Intron-Containing Transcript"/>
</dbReference>
<dbReference type="Reactome" id="R-SPO-3371453">
    <property type="pathway name" value="Regulation of HSF1-mediated heat shock response"/>
</dbReference>
<dbReference type="Reactome" id="R-SPO-4085377">
    <property type="pathway name" value="SUMOylation of SUMOylation proteins"/>
</dbReference>
<dbReference type="Reactome" id="R-SPO-4551638">
    <property type="pathway name" value="SUMOylation of chromatin organization proteins"/>
</dbReference>
<dbReference type="Reactome" id="R-SPO-4570464">
    <property type="pathway name" value="SUMOylation of RNA binding proteins"/>
</dbReference>
<dbReference type="Reactome" id="R-SPO-5578749">
    <property type="pathway name" value="Transcriptional regulation by small RNAs"/>
</dbReference>
<dbReference type="PRO" id="PR:O74424"/>
<dbReference type="Proteomes" id="UP000002485">
    <property type="component" value="Chromosome III"/>
</dbReference>
<dbReference type="GO" id="GO:0005737">
    <property type="term" value="C:cytoplasm"/>
    <property type="evidence" value="ECO:0007005"/>
    <property type="project" value="PomBase"/>
</dbReference>
<dbReference type="GO" id="GO:0034399">
    <property type="term" value="C:nuclear periphery"/>
    <property type="evidence" value="ECO:0000314"/>
    <property type="project" value="PomBase"/>
</dbReference>
<dbReference type="GO" id="GO:0005643">
    <property type="term" value="C:nuclear pore"/>
    <property type="evidence" value="ECO:0000314"/>
    <property type="project" value="PomBase"/>
</dbReference>
<dbReference type="GO" id="GO:0044615">
    <property type="term" value="C:nuclear pore nuclear basket"/>
    <property type="evidence" value="ECO:0000269"/>
    <property type="project" value="PomBase"/>
</dbReference>
<dbReference type="GO" id="GO:0140602">
    <property type="term" value="C:nucleolar peripheral inclusion body"/>
    <property type="evidence" value="ECO:0000314"/>
    <property type="project" value="PomBase"/>
</dbReference>
<dbReference type="GO" id="GO:0005634">
    <property type="term" value="C:nucleus"/>
    <property type="evidence" value="ECO:0000314"/>
    <property type="project" value="PomBase"/>
</dbReference>
<dbReference type="GO" id="GO:0017056">
    <property type="term" value="F:structural constituent of nuclear pore"/>
    <property type="evidence" value="ECO:0000318"/>
    <property type="project" value="GO_Central"/>
</dbReference>
<dbReference type="GO" id="GO:0006406">
    <property type="term" value="P:mRNA export from nucleus"/>
    <property type="evidence" value="ECO:0000315"/>
    <property type="project" value="PomBase"/>
</dbReference>
<dbReference type="GO" id="GO:0006606">
    <property type="term" value="P:protein import into nucleus"/>
    <property type="evidence" value="ECO:0000266"/>
    <property type="project" value="PomBase"/>
</dbReference>
<dbReference type="Gene3D" id="1.10.287.1490">
    <property type="match status" value="1"/>
</dbReference>
<dbReference type="InterPro" id="IPR012929">
    <property type="entry name" value="TPR/MLP1"/>
</dbReference>
<dbReference type="PANTHER" id="PTHR18898:SF7">
    <property type="entry name" value="NUCLEOPORIN NUP211"/>
    <property type="match status" value="1"/>
</dbReference>
<dbReference type="PANTHER" id="PTHR18898">
    <property type="entry name" value="NUCLEOPROTEIN TPR-RELATED"/>
    <property type="match status" value="1"/>
</dbReference>
<dbReference type="Pfam" id="PF25481">
    <property type="entry name" value="Nucleoprot-TPR"/>
    <property type="match status" value="1"/>
</dbReference>
<dbReference type="Pfam" id="PF07926">
    <property type="entry name" value="TPR_MLP1_2"/>
    <property type="match status" value="1"/>
</dbReference>
<comment type="function">
    <text evidence="3">Functions as a component of the nuclear pore complex (NPC). NPC components, collectively referred to as nucleoporins (NUPs), can play the role of both NPC structural components and of docking or interaction partners for transiently associated nuclear transport factors. Active directional transport is assured by both, a Phe-Gly (FG) repeat affinity gradient for these transport factors across the NPC and a transport cofactor concentration gradient across the nuclear envelope.</text>
</comment>
<comment type="subcellular location">
    <subcellularLocation>
        <location evidence="4">Cytoplasm</location>
    </subcellularLocation>
    <subcellularLocation>
        <location evidence="3">Nucleus</location>
    </subcellularLocation>
    <text evidence="3">Nuclear rim.</text>
</comment>
<evidence type="ECO:0000255" key="1"/>
<evidence type="ECO:0000256" key="2">
    <source>
        <dbReference type="SAM" id="MobiDB-lite"/>
    </source>
</evidence>
<evidence type="ECO:0000269" key="3">
    <source>
    </source>
</evidence>
<evidence type="ECO:0000269" key="4">
    <source>
    </source>
</evidence>
<evidence type="ECO:0000269" key="5">
    <source>
    </source>
</evidence>
<gene>
    <name type="primary">nup211</name>
    <name type="ORF">SPCC162.08c</name>
</gene>
<sequence>MHDSSWTEADILGVCSFLDIPKTKIDPLLQVDAFTSILIPLISKSKDYESIKNDRIVTEVNYEQQLRNSEKKLLQSNERYDLLEDERKLLENELSQIKEYLREKSSSYDTVLHDCSSLKSVNEALKQAQDQNLKQTAQLQNLLSDKEKEVEKKITIIKDLKDALASSTHQVLELQHTQQEKASLQTNYEFELQKLTQKNSILENNNTWLSRELQGVNDKLLSLHQEASLEKSQLSSQLSDAVLEKDALQRKVSSLSQQFTESNLRYQNIVAELSEMRKQYEFSQVSFEKEISSQKQISELWMEKCEDCSLRLKELQNSNGELEKLLEAAQSSFEEQLESHKEAEASLKSQINFLEKEVSSLESQLKLANERLRHYDEIEISDMSELKYSNLLNNSMKGFKGQSSVSDLYSERLYYKQKYEQTCQEVERLQRSYNHVMEEANLQHPLVKEQFKRFAHMQREIVAMSEQYQKSLEDCQKAKSRYEQLETLFKDKCTENKHYEQETKDLARQVQVLLHELDLCENGIVLGVDSRKKINSYVEKSLTEDETDTDQIISSRLVVFRNIRELQQQNQNLLSAVHELADRMEKDEKPDLDGAEIQEETLIKANETIDQLTKMLEEVSDQLRYSLKERDFFRSLVQENEKLLDMAPATPNSKLNTNLIEQTSYQRSLIRLEQLTNELESLKSISRNKEKKFEEAISSLQLEKSNIQLQLTSLTSERSLALEKLNDLEKSLVLSERSKDELDESYKSLQEQLASKKIEVQNVSSQLSICNSQLEQSNHIVDNLKSENLLLTSVKDKLKADLSNLESKLSSLQQDNFHMKAQIESSNQEYTATVDSMNSRILELSNDLRVANSKLSECSDDVRRLTLQNSFDLREHQTLVLQLQSNITELKQDITLQRTVRNQLEIQTTELKERLKFMEERQENLQSKLIAANKDTTQNPDNVEVEAISIELERTKEKLRMAELEKSNIQQKYLASEKTLEMMNETHEQFKHLVESEISTREEKITSLRSELLDLNKRVEVLKEEKESSSKELAKQLEDAVREKDSALSFKKDYEKIRSDADRVITSLKEDIEKERSLMKECHSNYESEIVSHGRTTQKLRDLRTEFDEVNTKYLKLKANFEQQHSGLSGAEKDWNIQRKAMEDEISSLKDYILGLENQNKLLHSQFDSLSQQITVLQQNSSENLNISANLEAVQDNDLRELVSYLRHEKEIMDNKYELTILDNRGLNQQVKSLQSTVDSLQLELNRLQSLPVSNDQTDTPIISGSQEVQLLYESNSVLRKDNDAKLGKIQELEKEVEKLNASLNPLQTEINELKAEIGAKTASLNLMKEYNSRWKLRFQSVLNKYERVDPTQLEELKKNCEALEKEKQELETKLQETAKETDTFKQQVNSLNEEVENLKKEVEQANTKNTRLAAAWNEKCENLKKSSLTRFAHLKQELTNKNKELTSKNAENEAMQKEIESLKDSNHQLQESASSDAEQITKEQFEQLKSEKERTEKELADSKNELEHLQSEAVDADGKTEISNLEKEIHELRSDKEGLVQQVQNLSAELAALREHSPTQGSLENADEIARLRSQLESTKQYYEKEKETEILAARSELVAEKEKTKEELENQLNEKSQRIKELEEQAQKNSSENTHDNIDDMIKQQVEEKLKENSANFDVKLKKVVAETEFRSKAKISVYEKKTRDLQNKITQLEETIENLNKQLSNPEKTDESTSSVTETKPVTSKPTASKADVGQNATEASSAKREPSGKSLSARLQGTGKQKGVQRPAVSRPVPMKPDSGKLSITGASKRIATSKNAAQNAKELSSTAKSGSLKRQRDDANKGGSSSNQKKAK</sequence>
<proteinExistence type="evidence at protein level"/>
<reference key="1">
    <citation type="journal article" date="2002" name="Nature">
        <title>The genome sequence of Schizosaccharomyces pombe.</title>
        <authorList>
            <person name="Wood V."/>
            <person name="Gwilliam R."/>
            <person name="Rajandream M.A."/>
            <person name="Lyne M.H."/>
            <person name="Lyne R."/>
            <person name="Stewart A."/>
            <person name="Sgouros J.G."/>
            <person name="Peat N."/>
            <person name="Hayles J."/>
            <person name="Baker S.G."/>
            <person name="Basham D."/>
            <person name="Bowman S."/>
            <person name="Brooks K."/>
            <person name="Brown D."/>
            <person name="Brown S."/>
            <person name="Chillingworth T."/>
            <person name="Churcher C.M."/>
            <person name="Collins M."/>
            <person name="Connor R."/>
            <person name="Cronin A."/>
            <person name="Davis P."/>
            <person name="Feltwell T."/>
            <person name="Fraser A."/>
            <person name="Gentles S."/>
            <person name="Goble A."/>
            <person name="Hamlin N."/>
            <person name="Harris D.E."/>
            <person name="Hidalgo J."/>
            <person name="Hodgson G."/>
            <person name="Holroyd S."/>
            <person name="Hornsby T."/>
            <person name="Howarth S."/>
            <person name="Huckle E.J."/>
            <person name="Hunt S."/>
            <person name="Jagels K."/>
            <person name="James K.D."/>
            <person name="Jones L."/>
            <person name="Jones M."/>
            <person name="Leather S."/>
            <person name="McDonald S."/>
            <person name="McLean J."/>
            <person name="Mooney P."/>
            <person name="Moule S."/>
            <person name="Mungall K.L."/>
            <person name="Murphy L.D."/>
            <person name="Niblett D."/>
            <person name="Odell C."/>
            <person name="Oliver K."/>
            <person name="O'Neil S."/>
            <person name="Pearson D."/>
            <person name="Quail M.A."/>
            <person name="Rabbinowitsch E."/>
            <person name="Rutherford K.M."/>
            <person name="Rutter S."/>
            <person name="Saunders D."/>
            <person name="Seeger K."/>
            <person name="Sharp S."/>
            <person name="Skelton J."/>
            <person name="Simmonds M.N."/>
            <person name="Squares R."/>
            <person name="Squares S."/>
            <person name="Stevens K."/>
            <person name="Taylor K."/>
            <person name="Taylor R.G."/>
            <person name="Tivey A."/>
            <person name="Walsh S.V."/>
            <person name="Warren T."/>
            <person name="Whitehead S."/>
            <person name="Woodward J.R."/>
            <person name="Volckaert G."/>
            <person name="Aert R."/>
            <person name="Robben J."/>
            <person name="Grymonprez B."/>
            <person name="Weltjens I."/>
            <person name="Vanstreels E."/>
            <person name="Rieger M."/>
            <person name="Schaefer M."/>
            <person name="Mueller-Auer S."/>
            <person name="Gabel C."/>
            <person name="Fuchs M."/>
            <person name="Duesterhoeft A."/>
            <person name="Fritzc C."/>
            <person name="Holzer E."/>
            <person name="Moestl D."/>
            <person name="Hilbert H."/>
            <person name="Borzym K."/>
            <person name="Langer I."/>
            <person name="Beck A."/>
            <person name="Lehrach H."/>
            <person name="Reinhardt R."/>
            <person name="Pohl T.M."/>
            <person name="Eger P."/>
            <person name="Zimmermann W."/>
            <person name="Wedler H."/>
            <person name="Wambutt R."/>
            <person name="Purnelle B."/>
            <person name="Goffeau A."/>
            <person name="Cadieu E."/>
            <person name="Dreano S."/>
            <person name="Gloux S."/>
            <person name="Lelaure V."/>
            <person name="Mottier S."/>
            <person name="Galibert F."/>
            <person name="Aves S.J."/>
            <person name="Xiang Z."/>
            <person name="Hunt C."/>
            <person name="Moore K."/>
            <person name="Hurst S.M."/>
            <person name="Lucas M."/>
            <person name="Rochet M."/>
            <person name="Gaillardin C."/>
            <person name="Tallada V.A."/>
            <person name="Garzon A."/>
            <person name="Thode G."/>
            <person name="Daga R.R."/>
            <person name="Cruzado L."/>
            <person name="Jimenez J."/>
            <person name="Sanchez M."/>
            <person name="del Rey F."/>
            <person name="Benito J."/>
            <person name="Dominguez A."/>
            <person name="Revuelta J.L."/>
            <person name="Moreno S."/>
            <person name="Armstrong J."/>
            <person name="Forsburg S.L."/>
            <person name="Cerutti L."/>
            <person name="Lowe T."/>
            <person name="McCombie W.R."/>
            <person name="Paulsen I."/>
            <person name="Potashkin J."/>
            <person name="Shpakovski G.V."/>
            <person name="Ussery D."/>
            <person name="Barrell B.G."/>
            <person name="Nurse P."/>
        </authorList>
    </citation>
    <scope>NUCLEOTIDE SEQUENCE [LARGE SCALE GENOMIC DNA]</scope>
    <source>
        <strain>972 / ATCC 24843</strain>
    </source>
</reference>
<reference key="2">
    <citation type="journal article" date="2004" name="Yeast">
        <title>Identification of genes encoding putative nucleoporins and transport factors in the fission yeast Schizosaccharomyces pombe: a deletion analysis.</title>
        <authorList>
            <person name="Chen X.Q."/>
            <person name="Du X."/>
            <person name="Liu J."/>
            <person name="Balasubramanian M.K."/>
            <person name="Balasundaram D."/>
        </authorList>
    </citation>
    <scope>FUNCTION</scope>
    <scope>SUBCELLULAR LOCATION</scope>
</reference>
<reference key="3">
    <citation type="journal article" date="2006" name="Nat. Biotechnol.">
        <title>ORFeome cloning and global analysis of protein localization in the fission yeast Schizosaccharomyces pombe.</title>
        <authorList>
            <person name="Matsuyama A."/>
            <person name="Arai R."/>
            <person name="Yashiroda Y."/>
            <person name="Shirai A."/>
            <person name="Kamata A."/>
            <person name="Sekido S."/>
            <person name="Kobayashi Y."/>
            <person name="Hashimoto A."/>
            <person name="Hamamoto M."/>
            <person name="Hiraoka Y."/>
            <person name="Horinouchi S."/>
            <person name="Yoshida M."/>
        </authorList>
    </citation>
    <scope>SUBCELLULAR LOCATION [LARGE SCALE ANALYSIS]</scope>
</reference>
<reference key="4">
    <citation type="journal article" date="2008" name="J. Proteome Res.">
        <title>Phosphoproteome analysis of fission yeast.</title>
        <authorList>
            <person name="Wilson-Grady J.T."/>
            <person name="Villen J."/>
            <person name="Gygi S.P."/>
        </authorList>
    </citation>
    <scope>PHOSPHORYLATION [LARGE SCALE ANALYSIS] AT THR-650; SER-1558; THR-1560 AND SER-1563</scope>
    <scope>IDENTIFICATION BY MASS SPECTROMETRY</scope>
</reference>
<organism>
    <name type="scientific">Schizosaccharomyces pombe (strain 972 / ATCC 24843)</name>
    <name type="common">Fission yeast</name>
    <dbReference type="NCBI Taxonomy" id="284812"/>
    <lineage>
        <taxon>Eukaryota</taxon>
        <taxon>Fungi</taxon>
        <taxon>Dikarya</taxon>
        <taxon>Ascomycota</taxon>
        <taxon>Taphrinomycotina</taxon>
        <taxon>Schizosaccharomycetes</taxon>
        <taxon>Schizosaccharomycetales</taxon>
        <taxon>Schizosaccharomycetaceae</taxon>
        <taxon>Schizosaccharomyces</taxon>
    </lineage>
</organism>
<protein>
    <recommendedName>
        <fullName>Nucleoporin nup211</fullName>
    </recommendedName>
    <alternativeName>
        <fullName>Nuclear pore protein nup211</fullName>
    </alternativeName>
</protein>
<name>NU211_SCHPO</name>
<accession>O74424</accession>
<keyword id="KW-0175">Coiled coil</keyword>
<keyword id="KW-0963">Cytoplasm</keyword>
<keyword id="KW-0539">Nucleus</keyword>
<keyword id="KW-0597">Phosphoprotein</keyword>
<keyword id="KW-1185">Reference proteome</keyword>
<keyword id="KW-0813">Transport</keyword>